<sequence>MKKFILFLIILLFSIYFLNVSSAEVCPFKDGFIIIYHDIGYDKLFGYTYNDSEILYFNNKNLMDITPISDYYFPELYHNITYFECGSTNNLTILSFGYFYFPKNGDGIVFLGVLVYTTKNNKINYTEKILWADVFYSVDDFDISPPACSPNEALLVYCYKMKADYPENILVLINNTNITELKKFEDDDYYTTFQHYIYQPIFIFTTYDSKAKKFYILDGRLSNTSFPLYSYYGGKIHFEDNITLPKYENISWECMDFYSINGTLYIVMKKLNCSNINYAGWYEDYLNQKPYLLIWKNKTIKIISNCSNPYYFVKIKGGEIPIEKSYLKKIFGNKYESIRITDLAYNNGILLIETNENHKLHYYIVKNNSIEEIKLKNIIKLYKKKHSLWDDIKKELEPKIYWVIHNWYIIVLIIAGLLWMAILWKK</sequence>
<reference key="1">
    <citation type="journal article" date="1996" name="Science">
        <title>Complete genome sequence of the methanogenic archaeon, Methanococcus jannaschii.</title>
        <authorList>
            <person name="Bult C.J."/>
            <person name="White O."/>
            <person name="Olsen G.J."/>
            <person name="Zhou L."/>
            <person name="Fleischmann R.D."/>
            <person name="Sutton G.G."/>
            <person name="Blake J.A."/>
            <person name="FitzGerald L.M."/>
            <person name="Clayton R.A."/>
            <person name="Gocayne J.D."/>
            <person name="Kerlavage A.R."/>
            <person name="Dougherty B.A."/>
            <person name="Tomb J.-F."/>
            <person name="Adams M.D."/>
            <person name="Reich C.I."/>
            <person name="Overbeek R."/>
            <person name="Kirkness E.F."/>
            <person name="Weinstock K.G."/>
            <person name="Merrick J.M."/>
            <person name="Glodek A."/>
            <person name="Scott J.L."/>
            <person name="Geoghagen N.S.M."/>
            <person name="Weidman J.F."/>
            <person name="Fuhrmann J.L."/>
            <person name="Nguyen D."/>
            <person name="Utterback T.R."/>
            <person name="Kelley J.M."/>
            <person name="Peterson J.D."/>
            <person name="Sadow P.W."/>
            <person name="Hanna M.C."/>
            <person name="Cotton M.D."/>
            <person name="Roberts K.M."/>
            <person name="Hurst M.A."/>
            <person name="Kaine B.P."/>
            <person name="Borodovsky M."/>
            <person name="Klenk H.-P."/>
            <person name="Fraser C.M."/>
            <person name="Smith H.O."/>
            <person name="Woese C.R."/>
            <person name="Venter J.C."/>
        </authorList>
    </citation>
    <scope>NUCLEOTIDE SEQUENCE [LARGE SCALE GENOMIC DNA]</scope>
    <source>
        <strain>ATCC 43067 / DSM 2661 / JAL-1 / JCM 10045 / NBRC 100440</strain>
    </source>
</reference>
<keyword id="KW-1185">Reference proteome</keyword>
<keyword id="KW-0732">Signal</keyword>
<organism>
    <name type="scientific">Methanocaldococcus jannaschii (strain ATCC 43067 / DSM 2661 / JAL-1 / JCM 10045 / NBRC 100440)</name>
    <name type="common">Methanococcus jannaschii</name>
    <dbReference type="NCBI Taxonomy" id="243232"/>
    <lineage>
        <taxon>Archaea</taxon>
        <taxon>Methanobacteriati</taxon>
        <taxon>Methanobacteriota</taxon>
        <taxon>Methanomada group</taxon>
        <taxon>Methanococci</taxon>
        <taxon>Methanococcales</taxon>
        <taxon>Methanocaldococcaceae</taxon>
        <taxon>Methanocaldococcus</taxon>
    </lineage>
</organism>
<gene>
    <name type="ordered locus">MJ0958</name>
</gene>
<dbReference type="EMBL" id="L77117">
    <property type="protein sequence ID" value="AAB98971.1"/>
    <property type="molecule type" value="Genomic_DNA"/>
</dbReference>
<dbReference type="PIR" id="F64419">
    <property type="entry name" value="F64419"/>
</dbReference>
<dbReference type="RefSeq" id="WP_010870472.1">
    <property type="nucleotide sequence ID" value="NC_000909.1"/>
</dbReference>
<dbReference type="STRING" id="243232.MJ_0958"/>
<dbReference type="PaxDb" id="243232-MJ_0958"/>
<dbReference type="EnsemblBacteria" id="AAB98971">
    <property type="protein sequence ID" value="AAB98971"/>
    <property type="gene ID" value="MJ_0958"/>
</dbReference>
<dbReference type="GeneID" id="1451856"/>
<dbReference type="KEGG" id="mja:MJ_0958"/>
<dbReference type="eggNOG" id="arCOG09676">
    <property type="taxonomic scope" value="Archaea"/>
</dbReference>
<dbReference type="HOGENOM" id="CLU_651545_0_0_2"/>
<dbReference type="InParanoid" id="Q58368"/>
<dbReference type="OrthoDB" id="65515at2157"/>
<dbReference type="Proteomes" id="UP000000805">
    <property type="component" value="Chromosome"/>
</dbReference>
<accession>Q58368</accession>
<proteinExistence type="inferred from homology"/>
<protein>
    <recommendedName>
        <fullName>Uncharacterized protein MJ0958</fullName>
    </recommendedName>
</protein>
<name>Y958_METJA</name>
<evidence type="ECO:0000255" key="1"/>
<feature type="signal peptide" evidence="1">
    <location>
        <begin position="1"/>
        <end position="23"/>
    </location>
</feature>
<feature type="chain" id="PRO_0000014006" description="Uncharacterized protein MJ0958">
    <location>
        <begin position="24"/>
        <end position="426"/>
    </location>
</feature>